<name>KPYC_TOBAC</name>
<dbReference type="EC" id="2.7.1.40"/>
<dbReference type="EMBL" id="Z29492">
    <property type="protein sequence ID" value="CAA82628.1"/>
    <property type="molecule type" value="mRNA"/>
</dbReference>
<dbReference type="PIR" id="S41379">
    <property type="entry name" value="S41379"/>
</dbReference>
<dbReference type="RefSeq" id="NP_001312569.1">
    <property type="nucleotide sequence ID" value="NM_001325640.1"/>
</dbReference>
<dbReference type="SMR" id="Q42954"/>
<dbReference type="STRING" id="4097.Q42954"/>
<dbReference type="PaxDb" id="4097-Q42954"/>
<dbReference type="GeneID" id="107797877"/>
<dbReference type="KEGG" id="nta:107797877"/>
<dbReference type="OrthoDB" id="108365at2759"/>
<dbReference type="UniPathway" id="UPA00109">
    <property type="reaction ID" value="UER00188"/>
</dbReference>
<dbReference type="Proteomes" id="UP000084051">
    <property type="component" value="Unplaced"/>
</dbReference>
<dbReference type="GO" id="GO:0005737">
    <property type="term" value="C:cytoplasm"/>
    <property type="evidence" value="ECO:0000318"/>
    <property type="project" value="GO_Central"/>
</dbReference>
<dbReference type="GO" id="GO:0005524">
    <property type="term" value="F:ATP binding"/>
    <property type="evidence" value="ECO:0007669"/>
    <property type="project" value="UniProtKB-KW"/>
</dbReference>
<dbReference type="GO" id="GO:0016301">
    <property type="term" value="F:kinase activity"/>
    <property type="evidence" value="ECO:0007669"/>
    <property type="project" value="UniProtKB-KW"/>
</dbReference>
<dbReference type="GO" id="GO:0000287">
    <property type="term" value="F:magnesium ion binding"/>
    <property type="evidence" value="ECO:0007669"/>
    <property type="project" value="InterPro"/>
</dbReference>
<dbReference type="GO" id="GO:0030955">
    <property type="term" value="F:potassium ion binding"/>
    <property type="evidence" value="ECO:0007669"/>
    <property type="project" value="InterPro"/>
</dbReference>
<dbReference type="GO" id="GO:0004743">
    <property type="term" value="F:pyruvate kinase activity"/>
    <property type="evidence" value="ECO:0000318"/>
    <property type="project" value="GO_Central"/>
</dbReference>
<dbReference type="GO" id="GO:0006096">
    <property type="term" value="P:glycolytic process"/>
    <property type="evidence" value="ECO:0000318"/>
    <property type="project" value="GO_Central"/>
</dbReference>
<dbReference type="CDD" id="cd00288">
    <property type="entry name" value="Pyruvate_Kinase"/>
    <property type="match status" value="1"/>
</dbReference>
<dbReference type="FunFam" id="2.40.33.10:FF:000001">
    <property type="entry name" value="Pyruvate kinase"/>
    <property type="match status" value="1"/>
</dbReference>
<dbReference type="FunFam" id="3.20.20.60:FF:000001">
    <property type="entry name" value="Pyruvate kinase"/>
    <property type="match status" value="1"/>
</dbReference>
<dbReference type="FunFam" id="3.40.1380.20:FF:000005">
    <property type="entry name" value="Pyruvate kinase"/>
    <property type="match status" value="1"/>
</dbReference>
<dbReference type="Gene3D" id="3.20.20.60">
    <property type="entry name" value="Phosphoenolpyruvate-binding domains"/>
    <property type="match status" value="1"/>
</dbReference>
<dbReference type="Gene3D" id="2.40.33.10">
    <property type="entry name" value="PK beta-barrel domain-like"/>
    <property type="match status" value="1"/>
</dbReference>
<dbReference type="Gene3D" id="3.40.1380.20">
    <property type="entry name" value="Pyruvate kinase, C-terminal domain"/>
    <property type="match status" value="1"/>
</dbReference>
<dbReference type="InterPro" id="IPR001697">
    <property type="entry name" value="Pyr_Knase"/>
</dbReference>
<dbReference type="InterPro" id="IPR015813">
    <property type="entry name" value="Pyrv/PenolPyrv_kinase-like_dom"/>
</dbReference>
<dbReference type="InterPro" id="IPR040442">
    <property type="entry name" value="Pyrv_kinase-like_dom_sf"/>
</dbReference>
<dbReference type="InterPro" id="IPR011037">
    <property type="entry name" value="Pyrv_Knase-like_insert_dom_sf"/>
</dbReference>
<dbReference type="InterPro" id="IPR018209">
    <property type="entry name" value="Pyrv_Knase_AS"/>
</dbReference>
<dbReference type="InterPro" id="IPR015793">
    <property type="entry name" value="Pyrv_Knase_brl"/>
</dbReference>
<dbReference type="InterPro" id="IPR015795">
    <property type="entry name" value="Pyrv_Knase_C"/>
</dbReference>
<dbReference type="InterPro" id="IPR036918">
    <property type="entry name" value="Pyrv_Knase_C_sf"/>
</dbReference>
<dbReference type="InterPro" id="IPR015806">
    <property type="entry name" value="Pyrv_Knase_insert_dom_sf"/>
</dbReference>
<dbReference type="NCBIfam" id="NF004491">
    <property type="entry name" value="PRK05826.1"/>
    <property type="match status" value="1"/>
</dbReference>
<dbReference type="NCBIfam" id="NF004978">
    <property type="entry name" value="PRK06354.1"/>
    <property type="match status" value="1"/>
</dbReference>
<dbReference type="NCBIfam" id="TIGR01064">
    <property type="entry name" value="pyruv_kin"/>
    <property type="match status" value="1"/>
</dbReference>
<dbReference type="PANTHER" id="PTHR11817">
    <property type="entry name" value="PYRUVATE KINASE"/>
    <property type="match status" value="1"/>
</dbReference>
<dbReference type="Pfam" id="PF00224">
    <property type="entry name" value="PK"/>
    <property type="match status" value="1"/>
</dbReference>
<dbReference type="Pfam" id="PF02887">
    <property type="entry name" value="PK_C"/>
    <property type="match status" value="1"/>
</dbReference>
<dbReference type="PRINTS" id="PR01050">
    <property type="entry name" value="PYRUVTKNASE"/>
</dbReference>
<dbReference type="SUPFAM" id="SSF51621">
    <property type="entry name" value="Phosphoenolpyruvate/pyruvate domain"/>
    <property type="match status" value="1"/>
</dbReference>
<dbReference type="SUPFAM" id="SSF50800">
    <property type="entry name" value="PK beta-barrel domain-like"/>
    <property type="match status" value="1"/>
</dbReference>
<dbReference type="SUPFAM" id="SSF52935">
    <property type="entry name" value="PK C-terminal domain-like"/>
    <property type="match status" value="1"/>
</dbReference>
<dbReference type="PROSITE" id="PS00110">
    <property type="entry name" value="PYRUVATE_KINASE"/>
    <property type="match status" value="1"/>
</dbReference>
<reference key="1">
    <citation type="journal article" date="1995" name="Plant Mol. Biol.">
        <title>Molecular characterization of plastid pyruvate kinase from castor and tobacco.</title>
        <authorList>
            <person name="Blakeley S.D."/>
            <person name="Gottlob-Mchugh S."/>
            <person name="Wan J."/>
            <person name="Crews L."/>
            <person name="Miki B."/>
            <person name="Ko K."/>
            <person name="Dennis D.T."/>
        </authorList>
    </citation>
    <scope>NUCLEOTIDE SEQUENCE [MRNA]</scope>
</reference>
<sequence length="508" mass="55133">MAIENNNNGVNFCTVKRPKTKIVCTLGPASRSVPMIEKLLRAGMNVARFNFSHGSHDYHQETIDNLRQAMESTGILCAVMLDTKGPEIRTGFLKDAKPVQLKQGQEITISTDYSIKGDESMICMSYKKLAEDVKPQSVILCADGQITFTVLSCDKENGLDRCRCENTAVLGERKNVNLPGVIVDLPTLTDKDKDDILNWGVPNHIDMIALSFVRKGSDLVEVRKLLGEHAKNILLMSKVENQEGVANFDDILLNSDAFMVARGDLGMEIPIEKIFLAQKVMIYKCNIQGKPVVTATQMLESMIKSPRPTRAEATDVANAVLDGTDCVMLSGETAAGAYPDLAVGTMAKICIEAESTIDYPDVFKRIMSNAPVPMSPLESLASSAVRTANSAKAALILVLTRGGSTAKLVAKYRPGMPILSVVVPEIKTDSFDWTCSDESPARHSLIFRGLVPVLHAGSARASHEESTEEALDFALQHAKTKGLCKQGDSVVALHRVGTASVIKIVTVK</sequence>
<keyword id="KW-0067">ATP-binding</keyword>
<keyword id="KW-0963">Cytoplasm</keyword>
<keyword id="KW-0324">Glycolysis</keyword>
<keyword id="KW-0418">Kinase</keyword>
<keyword id="KW-0460">Magnesium</keyword>
<keyword id="KW-0479">Metal-binding</keyword>
<keyword id="KW-0547">Nucleotide-binding</keyword>
<keyword id="KW-0630">Potassium</keyword>
<keyword id="KW-0670">Pyruvate</keyword>
<keyword id="KW-1185">Reference proteome</keyword>
<keyword id="KW-0808">Transferase</keyword>
<feature type="chain" id="PRO_0000112127" description="Pyruvate kinase, cytosolic isozyme">
    <location>
        <begin position="1"/>
        <end position="508"/>
    </location>
</feature>
<feature type="binding site" evidence="1">
    <location>
        <position position="48"/>
    </location>
    <ligand>
        <name>substrate</name>
    </ligand>
</feature>
<feature type="binding site" evidence="2">
    <location>
        <begin position="50"/>
        <end position="53"/>
    </location>
    <ligand>
        <name>ATP</name>
        <dbReference type="ChEBI" id="CHEBI:30616"/>
    </ligand>
</feature>
<feature type="binding site" evidence="1">
    <location>
        <position position="50"/>
    </location>
    <ligand>
        <name>K(+)</name>
        <dbReference type="ChEBI" id="CHEBI:29103"/>
    </ligand>
</feature>
<feature type="binding site" evidence="1">
    <location>
        <position position="52"/>
    </location>
    <ligand>
        <name>K(+)</name>
        <dbReference type="ChEBI" id="CHEBI:29103"/>
    </ligand>
</feature>
<feature type="binding site" evidence="1">
    <location>
        <position position="82"/>
    </location>
    <ligand>
        <name>K(+)</name>
        <dbReference type="ChEBI" id="CHEBI:29103"/>
    </ligand>
</feature>
<feature type="binding site" evidence="1">
    <location>
        <position position="83"/>
    </location>
    <ligand>
        <name>K(+)</name>
        <dbReference type="ChEBI" id="CHEBI:29103"/>
    </ligand>
</feature>
<feature type="binding site" evidence="2">
    <location>
        <position position="89"/>
    </location>
    <ligand>
        <name>ATP</name>
        <dbReference type="ChEBI" id="CHEBI:30616"/>
    </ligand>
</feature>
<feature type="binding site" evidence="2">
    <location>
        <position position="174"/>
    </location>
    <ligand>
        <name>ATP</name>
        <dbReference type="ChEBI" id="CHEBI:30616"/>
    </ligand>
</feature>
<feature type="binding site" evidence="3">
    <location>
        <position position="240"/>
    </location>
    <ligand>
        <name>Mg(2+)</name>
        <dbReference type="ChEBI" id="CHEBI:18420"/>
    </ligand>
</feature>
<feature type="binding site" evidence="1">
    <location>
        <position position="263"/>
    </location>
    <ligand>
        <name>substrate</name>
    </ligand>
</feature>
<feature type="binding site" evidence="1">
    <location>
        <position position="264"/>
    </location>
    <ligand>
        <name>Mg(2+)</name>
        <dbReference type="ChEBI" id="CHEBI:18420"/>
    </ligand>
</feature>
<feature type="binding site" evidence="1">
    <location>
        <position position="264"/>
    </location>
    <ligand>
        <name>substrate</name>
    </ligand>
</feature>
<feature type="binding site" evidence="1">
    <location>
        <position position="296"/>
    </location>
    <ligand>
        <name>substrate</name>
    </ligand>
</feature>
<feature type="site" description="Transition state stabilizer" evidence="1">
    <location>
        <position position="238"/>
    </location>
</feature>
<evidence type="ECO:0000250" key="1"/>
<evidence type="ECO:0000250" key="2">
    <source>
        <dbReference type="UniProtKB" id="P14618"/>
    </source>
</evidence>
<evidence type="ECO:0000255" key="3"/>
<evidence type="ECO:0000305" key="4"/>
<accession>Q42954</accession>
<organism>
    <name type="scientific">Nicotiana tabacum</name>
    <name type="common">Common tobacco</name>
    <dbReference type="NCBI Taxonomy" id="4097"/>
    <lineage>
        <taxon>Eukaryota</taxon>
        <taxon>Viridiplantae</taxon>
        <taxon>Streptophyta</taxon>
        <taxon>Embryophyta</taxon>
        <taxon>Tracheophyta</taxon>
        <taxon>Spermatophyta</taxon>
        <taxon>Magnoliopsida</taxon>
        <taxon>eudicotyledons</taxon>
        <taxon>Gunneridae</taxon>
        <taxon>Pentapetalae</taxon>
        <taxon>asterids</taxon>
        <taxon>lamiids</taxon>
        <taxon>Solanales</taxon>
        <taxon>Solanaceae</taxon>
        <taxon>Nicotianoideae</taxon>
        <taxon>Nicotianeae</taxon>
        <taxon>Nicotiana</taxon>
    </lineage>
</organism>
<protein>
    <recommendedName>
        <fullName>Pyruvate kinase, cytosolic isozyme</fullName>
        <shortName>PK</shortName>
        <ecNumber>2.7.1.40</ecNumber>
    </recommendedName>
</protein>
<comment type="catalytic activity">
    <reaction>
        <text>pyruvate + ATP = phosphoenolpyruvate + ADP + H(+)</text>
        <dbReference type="Rhea" id="RHEA:18157"/>
        <dbReference type="ChEBI" id="CHEBI:15361"/>
        <dbReference type="ChEBI" id="CHEBI:15378"/>
        <dbReference type="ChEBI" id="CHEBI:30616"/>
        <dbReference type="ChEBI" id="CHEBI:58702"/>
        <dbReference type="ChEBI" id="CHEBI:456216"/>
        <dbReference type="EC" id="2.7.1.40"/>
    </reaction>
</comment>
<comment type="cofactor">
    <cofactor evidence="1">
        <name>Mg(2+)</name>
        <dbReference type="ChEBI" id="CHEBI:18420"/>
    </cofactor>
</comment>
<comment type="cofactor">
    <cofactor evidence="1">
        <name>K(+)</name>
        <dbReference type="ChEBI" id="CHEBI:29103"/>
    </cofactor>
</comment>
<comment type="pathway">
    <text>Carbohydrate degradation; glycolysis; pyruvate from D-glyceraldehyde 3-phosphate: step 5/5.</text>
</comment>
<comment type="subunit">
    <text evidence="1">Homotetramer.</text>
</comment>
<comment type="subcellular location">
    <subcellularLocation>
        <location>Cytoplasm</location>
    </subcellularLocation>
</comment>
<comment type="similarity">
    <text evidence="4">Belongs to the pyruvate kinase family.</text>
</comment>
<proteinExistence type="evidence at transcript level"/>